<accession>Q8EPW5</accession>
<name>PRMA_OCEIH</name>
<dbReference type="EC" id="2.1.1.-" evidence="1"/>
<dbReference type="EMBL" id="BA000028">
    <property type="protein sequence ID" value="BAC13922.1"/>
    <property type="molecule type" value="Genomic_DNA"/>
</dbReference>
<dbReference type="RefSeq" id="WP_011066363.1">
    <property type="nucleotide sequence ID" value="NC_004193.1"/>
</dbReference>
<dbReference type="SMR" id="Q8EPW5"/>
<dbReference type="STRING" id="221109.gene:10734212"/>
<dbReference type="KEGG" id="oih:OB1966"/>
<dbReference type="eggNOG" id="COG2264">
    <property type="taxonomic scope" value="Bacteria"/>
</dbReference>
<dbReference type="HOGENOM" id="CLU_049382_0_1_9"/>
<dbReference type="OrthoDB" id="9785995at2"/>
<dbReference type="PhylomeDB" id="Q8EPW5"/>
<dbReference type="Proteomes" id="UP000000822">
    <property type="component" value="Chromosome"/>
</dbReference>
<dbReference type="GO" id="GO:0005737">
    <property type="term" value="C:cytoplasm"/>
    <property type="evidence" value="ECO:0007669"/>
    <property type="project" value="UniProtKB-SubCell"/>
</dbReference>
<dbReference type="GO" id="GO:0016279">
    <property type="term" value="F:protein-lysine N-methyltransferase activity"/>
    <property type="evidence" value="ECO:0007669"/>
    <property type="project" value="RHEA"/>
</dbReference>
<dbReference type="GO" id="GO:0032259">
    <property type="term" value="P:methylation"/>
    <property type="evidence" value="ECO:0007669"/>
    <property type="project" value="UniProtKB-KW"/>
</dbReference>
<dbReference type="CDD" id="cd02440">
    <property type="entry name" value="AdoMet_MTases"/>
    <property type="match status" value="1"/>
</dbReference>
<dbReference type="Gene3D" id="3.40.50.150">
    <property type="entry name" value="Vaccinia Virus protein VP39"/>
    <property type="match status" value="1"/>
</dbReference>
<dbReference type="HAMAP" id="MF_00735">
    <property type="entry name" value="Methyltr_PrmA"/>
    <property type="match status" value="1"/>
</dbReference>
<dbReference type="InterPro" id="IPR050078">
    <property type="entry name" value="Ribosomal_L11_MeTrfase_PrmA"/>
</dbReference>
<dbReference type="InterPro" id="IPR004498">
    <property type="entry name" value="Ribosomal_PrmA_MeTrfase"/>
</dbReference>
<dbReference type="InterPro" id="IPR029063">
    <property type="entry name" value="SAM-dependent_MTases_sf"/>
</dbReference>
<dbReference type="NCBIfam" id="TIGR00406">
    <property type="entry name" value="prmA"/>
    <property type="match status" value="1"/>
</dbReference>
<dbReference type="PANTHER" id="PTHR43648">
    <property type="entry name" value="ELECTRON TRANSFER FLAVOPROTEIN BETA SUBUNIT LYSINE METHYLTRANSFERASE"/>
    <property type="match status" value="1"/>
</dbReference>
<dbReference type="PANTHER" id="PTHR43648:SF1">
    <property type="entry name" value="ELECTRON TRANSFER FLAVOPROTEIN BETA SUBUNIT LYSINE METHYLTRANSFERASE"/>
    <property type="match status" value="1"/>
</dbReference>
<dbReference type="Pfam" id="PF06325">
    <property type="entry name" value="PrmA"/>
    <property type="match status" value="1"/>
</dbReference>
<dbReference type="PIRSF" id="PIRSF000401">
    <property type="entry name" value="RPL11_MTase"/>
    <property type="match status" value="1"/>
</dbReference>
<dbReference type="SUPFAM" id="SSF53335">
    <property type="entry name" value="S-adenosyl-L-methionine-dependent methyltransferases"/>
    <property type="match status" value="1"/>
</dbReference>
<evidence type="ECO:0000255" key="1">
    <source>
        <dbReference type="HAMAP-Rule" id="MF_00735"/>
    </source>
</evidence>
<sequence>MKWSEISIHTTNEAIEPISNILHETGASGLVIEDPLDLERVEKAEFGELYDLDPALYPEEGVRIKAYLPMNSFLGETVEEIKSAINQLLIYDIDLGKNEVSLSEVHEEEWATAWKKYYKPVKISNRITITPTWEEYTPVSSDELIIELDPGMAFGTGTHPTTVLSIQGLEAYVKPGDLVMDVGCGSGVLSIAAAKLGADKVNAYDLDEIAVKSTKLNSKLNQIHESVKVKQNNLLEGVQQEADVIVSNILAEIIVRFVDDAWSNLKAGGYFITSGIIQNKKQLVIDNLTKQGFEVISLNEMEDWVSIVAKKPSEK</sequence>
<reference key="1">
    <citation type="journal article" date="2002" name="Nucleic Acids Res.">
        <title>Genome sequence of Oceanobacillus iheyensis isolated from the Iheya Ridge and its unexpected adaptive capabilities to extreme environments.</title>
        <authorList>
            <person name="Takami H."/>
            <person name="Takaki Y."/>
            <person name="Uchiyama I."/>
        </authorList>
    </citation>
    <scope>NUCLEOTIDE SEQUENCE [LARGE SCALE GENOMIC DNA]</scope>
    <source>
        <strain>DSM 14371 / CIP 107618 / JCM 11309 / KCTC 3954 / HTE831</strain>
    </source>
</reference>
<protein>
    <recommendedName>
        <fullName evidence="1">Ribosomal protein L11 methyltransferase</fullName>
        <shortName evidence="1">L11 Mtase</shortName>
        <ecNumber evidence="1">2.1.1.-</ecNumber>
    </recommendedName>
</protein>
<organism>
    <name type="scientific">Oceanobacillus iheyensis (strain DSM 14371 / CIP 107618 / JCM 11309 / KCTC 3954 / HTE831)</name>
    <dbReference type="NCBI Taxonomy" id="221109"/>
    <lineage>
        <taxon>Bacteria</taxon>
        <taxon>Bacillati</taxon>
        <taxon>Bacillota</taxon>
        <taxon>Bacilli</taxon>
        <taxon>Bacillales</taxon>
        <taxon>Bacillaceae</taxon>
        <taxon>Oceanobacillus</taxon>
    </lineage>
</organism>
<keyword id="KW-0963">Cytoplasm</keyword>
<keyword id="KW-0489">Methyltransferase</keyword>
<keyword id="KW-1185">Reference proteome</keyword>
<keyword id="KW-0949">S-adenosyl-L-methionine</keyword>
<keyword id="KW-0808">Transferase</keyword>
<feature type="chain" id="PRO_0000192284" description="Ribosomal protein L11 methyltransferase">
    <location>
        <begin position="1"/>
        <end position="315"/>
    </location>
</feature>
<feature type="binding site" evidence="1">
    <location>
        <position position="162"/>
    </location>
    <ligand>
        <name>S-adenosyl-L-methionine</name>
        <dbReference type="ChEBI" id="CHEBI:59789"/>
    </ligand>
</feature>
<feature type="binding site" evidence="1">
    <location>
        <position position="183"/>
    </location>
    <ligand>
        <name>S-adenosyl-L-methionine</name>
        <dbReference type="ChEBI" id="CHEBI:59789"/>
    </ligand>
</feature>
<feature type="binding site" evidence="1">
    <location>
        <position position="205"/>
    </location>
    <ligand>
        <name>S-adenosyl-L-methionine</name>
        <dbReference type="ChEBI" id="CHEBI:59789"/>
    </ligand>
</feature>
<feature type="binding site" evidence="1">
    <location>
        <position position="248"/>
    </location>
    <ligand>
        <name>S-adenosyl-L-methionine</name>
        <dbReference type="ChEBI" id="CHEBI:59789"/>
    </ligand>
</feature>
<proteinExistence type="inferred from homology"/>
<comment type="function">
    <text evidence="1">Methylates ribosomal protein L11.</text>
</comment>
<comment type="catalytic activity">
    <reaction evidence="1">
        <text>L-lysyl-[protein] + 3 S-adenosyl-L-methionine = N(6),N(6),N(6)-trimethyl-L-lysyl-[protein] + 3 S-adenosyl-L-homocysteine + 3 H(+)</text>
        <dbReference type="Rhea" id="RHEA:54192"/>
        <dbReference type="Rhea" id="RHEA-COMP:9752"/>
        <dbReference type="Rhea" id="RHEA-COMP:13826"/>
        <dbReference type="ChEBI" id="CHEBI:15378"/>
        <dbReference type="ChEBI" id="CHEBI:29969"/>
        <dbReference type="ChEBI" id="CHEBI:57856"/>
        <dbReference type="ChEBI" id="CHEBI:59789"/>
        <dbReference type="ChEBI" id="CHEBI:61961"/>
    </reaction>
</comment>
<comment type="subcellular location">
    <subcellularLocation>
        <location evidence="1">Cytoplasm</location>
    </subcellularLocation>
</comment>
<comment type="similarity">
    <text evidence="1">Belongs to the methyltransferase superfamily. PrmA family.</text>
</comment>
<gene>
    <name evidence="1" type="primary">prmA</name>
    <name type="ordered locus">OB1966</name>
</gene>